<keyword id="KW-0028">Amino-acid biosynthesis</keyword>
<keyword id="KW-0368">Histidine biosynthesis</keyword>
<keyword id="KW-0378">Hydrolase</keyword>
<keyword id="KW-0486">Methionine biosynthesis</keyword>
<keyword id="KW-0511">Multifunctional enzyme</keyword>
<keyword id="KW-0521">NADP</keyword>
<keyword id="KW-0554">One-carbon metabolism</keyword>
<keyword id="KW-0560">Oxidoreductase</keyword>
<keyword id="KW-0658">Purine biosynthesis</keyword>
<keyword id="KW-1185">Reference proteome</keyword>
<organism>
    <name type="scientific">Photobacterium profundum (strain SS9)</name>
    <dbReference type="NCBI Taxonomy" id="298386"/>
    <lineage>
        <taxon>Bacteria</taxon>
        <taxon>Pseudomonadati</taxon>
        <taxon>Pseudomonadota</taxon>
        <taxon>Gammaproteobacteria</taxon>
        <taxon>Vibrionales</taxon>
        <taxon>Vibrionaceae</taxon>
        <taxon>Photobacterium</taxon>
    </lineage>
</organism>
<feature type="chain" id="PRO_0000268430" description="Bifunctional protein FolD">
    <location>
        <begin position="1"/>
        <end position="285"/>
    </location>
</feature>
<feature type="binding site" evidence="1">
    <location>
        <begin position="166"/>
        <end position="168"/>
    </location>
    <ligand>
        <name>NADP(+)</name>
        <dbReference type="ChEBI" id="CHEBI:58349"/>
    </ligand>
</feature>
<feature type="binding site" evidence="1">
    <location>
        <position position="232"/>
    </location>
    <ligand>
        <name>NADP(+)</name>
        <dbReference type="ChEBI" id="CHEBI:58349"/>
    </ligand>
</feature>
<name>FOLD_PHOPR</name>
<sequence>MAAQIIDGKLIAQTVRQEVAARVKARVEAGLRAPGLAVVLVGQDPASQIYVSSKRKACEEVGFISQSFDLPANTKEIELLALINELNTNKEIDGILVQLPLPAGIDTTNILEHIDPEKDVDGFHPYNVGRLSQRIPKLRSCTPKGIITLLERYNIPVRGKHAVIVGASNIVGRPMTLEMLLAGATTTTCHRFTQDLEHHIRQADILVVAVGKPHFIPGDWIKEGATVIDVGINRLDSGKLAGDVEYDVAREKAKYITPVPGGVGPMTVATLIENTLLACEQYHSD</sequence>
<comment type="function">
    <text evidence="1">Catalyzes the oxidation of 5,10-methylenetetrahydrofolate to 5,10-methenyltetrahydrofolate and then the hydrolysis of 5,10-methenyltetrahydrofolate to 10-formyltetrahydrofolate.</text>
</comment>
<comment type="catalytic activity">
    <reaction evidence="1">
        <text>(6R)-5,10-methylene-5,6,7,8-tetrahydrofolate + NADP(+) = (6R)-5,10-methenyltetrahydrofolate + NADPH</text>
        <dbReference type="Rhea" id="RHEA:22812"/>
        <dbReference type="ChEBI" id="CHEBI:15636"/>
        <dbReference type="ChEBI" id="CHEBI:57455"/>
        <dbReference type="ChEBI" id="CHEBI:57783"/>
        <dbReference type="ChEBI" id="CHEBI:58349"/>
        <dbReference type="EC" id="1.5.1.5"/>
    </reaction>
</comment>
<comment type="catalytic activity">
    <reaction evidence="1">
        <text>(6R)-5,10-methenyltetrahydrofolate + H2O = (6R)-10-formyltetrahydrofolate + H(+)</text>
        <dbReference type="Rhea" id="RHEA:23700"/>
        <dbReference type="ChEBI" id="CHEBI:15377"/>
        <dbReference type="ChEBI" id="CHEBI:15378"/>
        <dbReference type="ChEBI" id="CHEBI:57455"/>
        <dbReference type="ChEBI" id="CHEBI:195366"/>
        <dbReference type="EC" id="3.5.4.9"/>
    </reaction>
</comment>
<comment type="pathway">
    <text evidence="1">One-carbon metabolism; tetrahydrofolate interconversion.</text>
</comment>
<comment type="subunit">
    <text evidence="1">Homodimer.</text>
</comment>
<comment type="similarity">
    <text evidence="1">Belongs to the tetrahydrofolate dehydrogenase/cyclohydrolase family.</text>
</comment>
<gene>
    <name evidence="1" type="primary">folD</name>
    <name type="ordered locus">PBPRA2641</name>
</gene>
<protein>
    <recommendedName>
        <fullName evidence="1">Bifunctional protein FolD</fullName>
    </recommendedName>
    <domain>
        <recommendedName>
            <fullName evidence="1">Methylenetetrahydrofolate dehydrogenase</fullName>
            <ecNumber evidence="1">1.5.1.5</ecNumber>
        </recommendedName>
    </domain>
    <domain>
        <recommendedName>
            <fullName evidence="1">Methenyltetrahydrofolate cyclohydrolase</fullName>
            <ecNumber evidence="1">3.5.4.9</ecNumber>
        </recommendedName>
    </domain>
</protein>
<accession>Q6LNV7</accession>
<dbReference type="EC" id="1.5.1.5" evidence="1"/>
<dbReference type="EC" id="3.5.4.9" evidence="1"/>
<dbReference type="EMBL" id="CR378671">
    <property type="protein sequence ID" value="CAG21019.1"/>
    <property type="molecule type" value="Genomic_DNA"/>
</dbReference>
<dbReference type="RefSeq" id="WP_011219298.1">
    <property type="nucleotide sequence ID" value="NC_006370.1"/>
</dbReference>
<dbReference type="SMR" id="Q6LNV7"/>
<dbReference type="STRING" id="298386.PBPRA2641"/>
<dbReference type="KEGG" id="ppr:PBPRA2641"/>
<dbReference type="eggNOG" id="COG0190">
    <property type="taxonomic scope" value="Bacteria"/>
</dbReference>
<dbReference type="HOGENOM" id="CLU_034045_2_1_6"/>
<dbReference type="UniPathway" id="UPA00193"/>
<dbReference type="Proteomes" id="UP000000593">
    <property type="component" value="Chromosome 1"/>
</dbReference>
<dbReference type="GO" id="GO:0005829">
    <property type="term" value="C:cytosol"/>
    <property type="evidence" value="ECO:0007669"/>
    <property type="project" value="TreeGrafter"/>
</dbReference>
<dbReference type="GO" id="GO:0004477">
    <property type="term" value="F:methenyltetrahydrofolate cyclohydrolase activity"/>
    <property type="evidence" value="ECO:0007669"/>
    <property type="project" value="UniProtKB-UniRule"/>
</dbReference>
<dbReference type="GO" id="GO:0004488">
    <property type="term" value="F:methylenetetrahydrofolate dehydrogenase (NADP+) activity"/>
    <property type="evidence" value="ECO:0007669"/>
    <property type="project" value="UniProtKB-UniRule"/>
</dbReference>
<dbReference type="GO" id="GO:0000105">
    <property type="term" value="P:L-histidine biosynthetic process"/>
    <property type="evidence" value="ECO:0007669"/>
    <property type="project" value="UniProtKB-KW"/>
</dbReference>
<dbReference type="GO" id="GO:0009086">
    <property type="term" value="P:methionine biosynthetic process"/>
    <property type="evidence" value="ECO:0007669"/>
    <property type="project" value="UniProtKB-KW"/>
</dbReference>
<dbReference type="GO" id="GO:0006164">
    <property type="term" value="P:purine nucleotide biosynthetic process"/>
    <property type="evidence" value="ECO:0007669"/>
    <property type="project" value="UniProtKB-KW"/>
</dbReference>
<dbReference type="GO" id="GO:0035999">
    <property type="term" value="P:tetrahydrofolate interconversion"/>
    <property type="evidence" value="ECO:0007669"/>
    <property type="project" value="UniProtKB-UniRule"/>
</dbReference>
<dbReference type="CDD" id="cd01080">
    <property type="entry name" value="NAD_bind_m-THF_DH_Cyclohyd"/>
    <property type="match status" value="1"/>
</dbReference>
<dbReference type="FunFam" id="3.40.50.10860:FF:000001">
    <property type="entry name" value="Bifunctional protein FolD"/>
    <property type="match status" value="1"/>
</dbReference>
<dbReference type="FunFam" id="3.40.50.720:FF:000006">
    <property type="entry name" value="Bifunctional protein FolD"/>
    <property type="match status" value="1"/>
</dbReference>
<dbReference type="Gene3D" id="3.40.50.10860">
    <property type="entry name" value="Leucine Dehydrogenase, chain A, domain 1"/>
    <property type="match status" value="1"/>
</dbReference>
<dbReference type="Gene3D" id="3.40.50.720">
    <property type="entry name" value="NAD(P)-binding Rossmann-like Domain"/>
    <property type="match status" value="1"/>
</dbReference>
<dbReference type="HAMAP" id="MF_01576">
    <property type="entry name" value="THF_DHG_CYH"/>
    <property type="match status" value="1"/>
</dbReference>
<dbReference type="InterPro" id="IPR046346">
    <property type="entry name" value="Aminoacid_DH-like_N_sf"/>
</dbReference>
<dbReference type="InterPro" id="IPR036291">
    <property type="entry name" value="NAD(P)-bd_dom_sf"/>
</dbReference>
<dbReference type="InterPro" id="IPR000672">
    <property type="entry name" value="THF_DH/CycHdrlase"/>
</dbReference>
<dbReference type="InterPro" id="IPR020630">
    <property type="entry name" value="THF_DH/CycHdrlase_cat_dom"/>
</dbReference>
<dbReference type="InterPro" id="IPR020867">
    <property type="entry name" value="THF_DH/CycHdrlase_CS"/>
</dbReference>
<dbReference type="InterPro" id="IPR020631">
    <property type="entry name" value="THF_DH/CycHdrlase_NAD-bd_dom"/>
</dbReference>
<dbReference type="NCBIfam" id="NF008058">
    <property type="entry name" value="PRK10792.1"/>
    <property type="match status" value="1"/>
</dbReference>
<dbReference type="NCBIfam" id="NF010783">
    <property type="entry name" value="PRK14186.1"/>
    <property type="match status" value="1"/>
</dbReference>
<dbReference type="PANTHER" id="PTHR48099:SF5">
    <property type="entry name" value="C-1-TETRAHYDROFOLATE SYNTHASE, CYTOPLASMIC"/>
    <property type="match status" value="1"/>
</dbReference>
<dbReference type="PANTHER" id="PTHR48099">
    <property type="entry name" value="C-1-TETRAHYDROFOLATE SYNTHASE, CYTOPLASMIC-RELATED"/>
    <property type="match status" value="1"/>
</dbReference>
<dbReference type="Pfam" id="PF00763">
    <property type="entry name" value="THF_DHG_CYH"/>
    <property type="match status" value="1"/>
</dbReference>
<dbReference type="Pfam" id="PF02882">
    <property type="entry name" value="THF_DHG_CYH_C"/>
    <property type="match status" value="1"/>
</dbReference>
<dbReference type="PRINTS" id="PR00085">
    <property type="entry name" value="THFDHDRGNASE"/>
</dbReference>
<dbReference type="SUPFAM" id="SSF53223">
    <property type="entry name" value="Aminoacid dehydrogenase-like, N-terminal domain"/>
    <property type="match status" value="1"/>
</dbReference>
<dbReference type="SUPFAM" id="SSF51735">
    <property type="entry name" value="NAD(P)-binding Rossmann-fold domains"/>
    <property type="match status" value="1"/>
</dbReference>
<dbReference type="PROSITE" id="PS00766">
    <property type="entry name" value="THF_DHG_CYH_1"/>
    <property type="match status" value="1"/>
</dbReference>
<dbReference type="PROSITE" id="PS00767">
    <property type="entry name" value="THF_DHG_CYH_2"/>
    <property type="match status" value="1"/>
</dbReference>
<proteinExistence type="inferred from homology"/>
<evidence type="ECO:0000255" key="1">
    <source>
        <dbReference type="HAMAP-Rule" id="MF_01576"/>
    </source>
</evidence>
<reference key="1">
    <citation type="journal article" date="2005" name="Science">
        <title>Life at depth: Photobacterium profundum genome sequence and expression analysis.</title>
        <authorList>
            <person name="Vezzi A."/>
            <person name="Campanaro S."/>
            <person name="D'Angelo M."/>
            <person name="Simonato F."/>
            <person name="Vitulo N."/>
            <person name="Lauro F.M."/>
            <person name="Cestaro A."/>
            <person name="Malacrida G."/>
            <person name="Simionati B."/>
            <person name="Cannata N."/>
            <person name="Romualdi C."/>
            <person name="Bartlett D.H."/>
            <person name="Valle G."/>
        </authorList>
    </citation>
    <scope>NUCLEOTIDE SEQUENCE [LARGE SCALE GENOMIC DNA]</scope>
    <source>
        <strain>ATCC BAA-1253 / SS9</strain>
    </source>
</reference>